<gene>
    <name evidence="1" type="primary">lepA</name>
    <name type="ordered locus">TWT_278</name>
</gene>
<evidence type="ECO:0000255" key="1">
    <source>
        <dbReference type="HAMAP-Rule" id="MF_00071"/>
    </source>
</evidence>
<keyword id="KW-1003">Cell membrane</keyword>
<keyword id="KW-0342">GTP-binding</keyword>
<keyword id="KW-0378">Hydrolase</keyword>
<keyword id="KW-0472">Membrane</keyword>
<keyword id="KW-0547">Nucleotide-binding</keyword>
<keyword id="KW-0648">Protein biosynthesis</keyword>
<keyword id="KW-1185">Reference proteome</keyword>
<reference key="1">
    <citation type="journal article" date="2003" name="Genome Res.">
        <title>Tropheryma whipplei twist: a human pathogenic Actinobacteria with a reduced genome.</title>
        <authorList>
            <person name="Raoult D."/>
            <person name="Ogata H."/>
            <person name="Audic S."/>
            <person name="Robert C."/>
            <person name="Suhre K."/>
            <person name="Drancourt M."/>
            <person name="Claverie J.-M."/>
        </authorList>
    </citation>
    <scope>NUCLEOTIDE SEQUENCE [LARGE SCALE GENOMIC DNA]</scope>
    <source>
        <strain>Twist</strain>
    </source>
</reference>
<proteinExistence type="inferred from homology"/>
<organism>
    <name type="scientific">Tropheryma whipplei (strain Twist)</name>
    <name type="common">Whipple's bacillus</name>
    <dbReference type="NCBI Taxonomy" id="203267"/>
    <lineage>
        <taxon>Bacteria</taxon>
        <taxon>Bacillati</taxon>
        <taxon>Actinomycetota</taxon>
        <taxon>Actinomycetes</taxon>
        <taxon>Micrococcales</taxon>
        <taxon>Tropherymataceae</taxon>
        <taxon>Tropheryma</taxon>
    </lineage>
</organism>
<name>LEPA_TROWT</name>
<protein>
    <recommendedName>
        <fullName evidence="1">Elongation factor 4</fullName>
        <shortName evidence="1">EF-4</shortName>
        <ecNumber evidence="1">3.6.5.n1</ecNumber>
    </recommendedName>
    <alternativeName>
        <fullName evidence="1">Ribosomal back-translocase LepA</fullName>
    </alternativeName>
</protein>
<comment type="function">
    <text evidence="1">Required for accurate and efficient protein synthesis under certain stress conditions. May act as a fidelity factor of the translation reaction, by catalyzing a one-codon backward translocation of tRNAs on improperly translocated ribosomes. Back-translocation proceeds from a post-translocation (POST) complex to a pre-translocation (PRE) complex, thus giving elongation factor G a second chance to translocate the tRNAs correctly. Binds to ribosomes in a GTP-dependent manner.</text>
</comment>
<comment type="catalytic activity">
    <reaction evidence="1">
        <text>GTP + H2O = GDP + phosphate + H(+)</text>
        <dbReference type="Rhea" id="RHEA:19669"/>
        <dbReference type="ChEBI" id="CHEBI:15377"/>
        <dbReference type="ChEBI" id="CHEBI:15378"/>
        <dbReference type="ChEBI" id="CHEBI:37565"/>
        <dbReference type="ChEBI" id="CHEBI:43474"/>
        <dbReference type="ChEBI" id="CHEBI:58189"/>
        <dbReference type="EC" id="3.6.5.n1"/>
    </reaction>
</comment>
<comment type="subcellular location">
    <subcellularLocation>
        <location evidence="1">Cell membrane</location>
        <topology evidence="1">Peripheral membrane protein</topology>
        <orientation evidence="1">Cytoplasmic side</orientation>
    </subcellularLocation>
</comment>
<comment type="similarity">
    <text evidence="1">Belongs to the TRAFAC class translation factor GTPase superfamily. Classic translation factor GTPase family. LepA subfamily.</text>
</comment>
<dbReference type="EC" id="3.6.5.n1" evidence="1"/>
<dbReference type="EMBL" id="AE014184">
    <property type="protein sequence ID" value="AAO44375.1"/>
    <property type="molecule type" value="Genomic_DNA"/>
</dbReference>
<dbReference type="RefSeq" id="WP_011102475.1">
    <property type="nucleotide sequence ID" value="NC_004572.3"/>
</dbReference>
<dbReference type="SMR" id="Q83MZ5"/>
<dbReference type="STRING" id="203267.TWT_278"/>
<dbReference type="KEGG" id="twh:TWT_278"/>
<dbReference type="eggNOG" id="COG0481">
    <property type="taxonomic scope" value="Bacteria"/>
</dbReference>
<dbReference type="HOGENOM" id="CLU_009995_3_3_11"/>
<dbReference type="OrthoDB" id="9801472at2"/>
<dbReference type="Proteomes" id="UP000002200">
    <property type="component" value="Chromosome"/>
</dbReference>
<dbReference type="GO" id="GO:0005886">
    <property type="term" value="C:plasma membrane"/>
    <property type="evidence" value="ECO:0007669"/>
    <property type="project" value="UniProtKB-SubCell"/>
</dbReference>
<dbReference type="GO" id="GO:0005525">
    <property type="term" value="F:GTP binding"/>
    <property type="evidence" value="ECO:0007669"/>
    <property type="project" value="UniProtKB-UniRule"/>
</dbReference>
<dbReference type="GO" id="GO:0003924">
    <property type="term" value="F:GTPase activity"/>
    <property type="evidence" value="ECO:0007669"/>
    <property type="project" value="UniProtKB-UniRule"/>
</dbReference>
<dbReference type="GO" id="GO:0043022">
    <property type="term" value="F:ribosome binding"/>
    <property type="evidence" value="ECO:0007669"/>
    <property type="project" value="UniProtKB-UniRule"/>
</dbReference>
<dbReference type="GO" id="GO:0003746">
    <property type="term" value="F:translation elongation factor activity"/>
    <property type="evidence" value="ECO:0007669"/>
    <property type="project" value="UniProtKB-UniRule"/>
</dbReference>
<dbReference type="GO" id="GO:0045727">
    <property type="term" value="P:positive regulation of translation"/>
    <property type="evidence" value="ECO:0007669"/>
    <property type="project" value="UniProtKB-UniRule"/>
</dbReference>
<dbReference type="CDD" id="cd03699">
    <property type="entry name" value="EF4_II"/>
    <property type="match status" value="1"/>
</dbReference>
<dbReference type="CDD" id="cd16260">
    <property type="entry name" value="EF4_III"/>
    <property type="match status" value="1"/>
</dbReference>
<dbReference type="CDD" id="cd01890">
    <property type="entry name" value="LepA"/>
    <property type="match status" value="1"/>
</dbReference>
<dbReference type="CDD" id="cd03709">
    <property type="entry name" value="lepA_C"/>
    <property type="match status" value="1"/>
</dbReference>
<dbReference type="FunFam" id="3.40.50.300:FF:000078">
    <property type="entry name" value="Elongation factor 4"/>
    <property type="match status" value="1"/>
</dbReference>
<dbReference type="FunFam" id="2.40.30.10:FF:000015">
    <property type="entry name" value="Translation factor GUF1, mitochondrial"/>
    <property type="match status" value="1"/>
</dbReference>
<dbReference type="FunFam" id="3.30.70.240:FF:000007">
    <property type="entry name" value="Translation factor GUF1, mitochondrial"/>
    <property type="match status" value="1"/>
</dbReference>
<dbReference type="FunFam" id="3.30.70.2570:FF:000001">
    <property type="entry name" value="Translation factor GUF1, mitochondrial"/>
    <property type="match status" value="1"/>
</dbReference>
<dbReference type="FunFam" id="3.30.70.870:FF:000004">
    <property type="entry name" value="Translation factor GUF1, mitochondrial"/>
    <property type="match status" value="1"/>
</dbReference>
<dbReference type="Gene3D" id="3.30.70.240">
    <property type="match status" value="1"/>
</dbReference>
<dbReference type="Gene3D" id="3.30.70.2570">
    <property type="entry name" value="Elongation factor 4, C-terminal domain"/>
    <property type="match status" value="1"/>
</dbReference>
<dbReference type="Gene3D" id="3.30.70.870">
    <property type="entry name" value="Elongation Factor G (Translational Gtpase), domain 3"/>
    <property type="match status" value="1"/>
</dbReference>
<dbReference type="Gene3D" id="3.40.50.300">
    <property type="entry name" value="P-loop containing nucleotide triphosphate hydrolases"/>
    <property type="match status" value="1"/>
</dbReference>
<dbReference type="Gene3D" id="2.40.30.10">
    <property type="entry name" value="Translation factors"/>
    <property type="match status" value="1"/>
</dbReference>
<dbReference type="HAMAP" id="MF_00071">
    <property type="entry name" value="LepA"/>
    <property type="match status" value="1"/>
</dbReference>
<dbReference type="InterPro" id="IPR006297">
    <property type="entry name" value="EF-4"/>
</dbReference>
<dbReference type="InterPro" id="IPR035647">
    <property type="entry name" value="EFG_III/V"/>
</dbReference>
<dbReference type="InterPro" id="IPR000640">
    <property type="entry name" value="EFG_V-like"/>
</dbReference>
<dbReference type="InterPro" id="IPR004161">
    <property type="entry name" value="EFTu-like_2"/>
</dbReference>
<dbReference type="InterPro" id="IPR031157">
    <property type="entry name" value="G_TR_CS"/>
</dbReference>
<dbReference type="InterPro" id="IPR038363">
    <property type="entry name" value="LepA_C_sf"/>
</dbReference>
<dbReference type="InterPro" id="IPR013842">
    <property type="entry name" value="LepA_CTD"/>
</dbReference>
<dbReference type="InterPro" id="IPR035654">
    <property type="entry name" value="LepA_IV"/>
</dbReference>
<dbReference type="InterPro" id="IPR027417">
    <property type="entry name" value="P-loop_NTPase"/>
</dbReference>
<dbReference type="InterPro" id="IPR005225">
    <property type="entry name" value="Small_GTP-bd"/>
</dbReference>
<dbReference type="InterPro" id="IPR000795">
    <property type="entry name" value="T_Tr_GTP-bd_dom"/>
</dbReference>
<dbReference type="NCBIfam" id="TIGR01393">
    <property type="entry name" value="lepA"/>
    <property type="match status" value="1"/>
</dbReference>
<dbReference type="NCBIfam" id="TIGR00231">
    <property type="entry name" value="small_GTP"/>
    <property type="match status" value="1"/>
</dbReference>
<dbReference type="PANTHER" id="PTHR43512:SF4">
    <property type="entry name" value="TRANSLATION FACTOR GUF1 HOMOLOG, CHLOROPLASTIC"/>
    <property type="match status" value="1"/>
</dbReference>
<dbReference type="PANTHER" id="PTHR43512">
    <property type="entry name" value="TRANSLATION FACTOR GUF1-RELATED"/>
    <property type="match status" value="1"/>
</dbReference>
<dbReference type="Pfam" id="PF00679">
    <property type="entry name" value="EFG_C"/>
    <property type="match status" value="1"/>
</dbReference>
<dbReference type="Pfam" id="PF00009">
    <property type="entry name" value="GTP_EFTU"/>
    <property type="match status" value="1"/>
</dbReference>
<dbReference type="Pfam" id="PF03144">
    <property type="entry name" value="GTP_EFTU_D2"/>
    <property type="match status" value="1"/>
</dbReference>
<dbReference type="Pfam" id="PF06421">
    <property type="entry name" value="LepA_C"/>
    <property type="match status" value="1"/>
</dbReference>
<dbReference type="PRINTS" id="PR00315">
    <property type="entry name" value="ELONGATNFCT"/>
</dbReference>
<dbReference type="SMART" id="SM00838">
    <property type="entry name" value="EFG_C"/>
    <property type="match status" value="1"/>
</dbReference>
<dbReference type="SUPFAM" id="SSF54980">
    <property type="entry name" value="EF-G C-terminal domain-like"/>
    <property type="match status" value="2"/>
</dbReference>
<dbReference type="SUPFAM" id="SSF52540">
    <property type="entry name" value="P-loop containing nucleoside triphosphate hydrolases"/>
    <property type="match status" value="1"/>
</dbReference>
<dbReference type="PROSITE" id="PS00301">
    <property type="entry name" value="G_TR_1"/>
    <property type="match status" value="1"/>
</dbReference>
<dbReference type="PROSITE" id="PS51722">
    <property type="entry name" value="G_TR_2"/>
    <property type="match status" value="1"/>
</dbReference>
<accession>Q83MZ5</accession>
<feature type="chain" id="PRO_0000176368" description="Elongation factor 4">
    <location>
        <begin position="1"/>
        <end position="601"/>
    </location>
</feature>
<feature type="domain" description="tr-type G">
    <location>
        <begin position="8"/>
        <end position="189"/>
    </location>
</feature>
<feature type="binding site" evidence="1">
    <location>
        <begin position="20"/>
        <end position="25"/>
    </location>
    <ligand>
        <name>GTP</name>
        <dbReference type="ChEBI" id="CHEBI:37565"/>
    </ligand>
</feature>
<sequence>MTDRVLPEQIRNFGIIAHVDHGKSTLADRILQLTGAVSDRDMREQYLDRLYIERERGITIKSQAVTLQWDCDATQYVLNMVDTPGHVDFTYEVSRSLAACEAAVILVDATQGVEAQTLANLHLAIENNLLIIPVLSKVDLPSADVEGATLELSEVLECRVEDVMHVSGKTGYGVKELLDLIVRKAPPPKGDVTSAPRALIFDSIYDSYRGVVTYVKMCDGTIRVGDKIRMMSTGAEHTLLEVGVSNPEPQSRHSLSVGEVGYFITGVKDVRKSRVGDTITTDTHTATVPLPGYSNPKPMVFSGIYPLNGNEYSALREGLDRLKLSDASIVYTPETSAALGFGFRCGFLGLLHMEIVSERLNREFGLATISTAPSVAYEITPDGEKTLVVMNPSDFPSGKIKEIKEPTVKVSILSPKEYIGSIMELCQARRGVMQGIEYFGSVRAELIYVMPLAEIVFDFFDSLKSRTKGYASFDYNPEGSQPADLVKVDILLQGNKVDAFSAIVHSSKAYSYGSSISKRLSELIPRQQFEVPIQAAIGSRVVARETIRAVRKDVVAKCYGGDITRKRKLLEKQKQGKARMKLIGRVEVPQEVFVATLSSYK</sequence>